<organism>
    <name type="scientific">Chlorophthalmus agassizi</name>
    <name type="common">Shortnose greeneye</name>
    <dbReference type="NCBI Taxonomy" id="143313"/>
    <lineage>
        <taxon>Eukaryota</taxon>
        <taxon>Metazoa</taxon>
        <taxon>Chordata</taxon>
        <taxon>Craniata</taxon>
        <taxon>Vertebrata</taxon>
        <taxon>Euteleostomi</taxon>
        <taxon>Actinopterygii</taxon>
        <taxon>Neopterygii</taxon>
        <taxon>Teleostei</taxon>
        <taxon>Neoteleostei</taxon>
        <taxon>Aulopa</taxon>
        <taxon>Aulopiformes</taxon>
        <taxon>Alepisauroidei</taxon>
        <taxon>Chlorophthalmidae</taxon>
        <taxon>Chlorophthalmus</taxon>
    </lineage>
</organism>
<feature type="chain" id="PRO_0000060781" description="Cytochrome b">
    <location>
        <begin position="1"/>
        <end position="379"/>
    </location>
</feature>
<feature type="transmembrane region" description="Helical" evidence="2">
    <location>
        <begin position="32"/>
        <end position="52"/>
    </location>
</feature>
<feature type="transmembrane region" description="Helical" evidence="2">
    <location>
        <begin position="76"/>
        <end position="97"/>
    </location>
</feature>
<feature type="transmembrane region" description="Helical" evidence="2">
    <location>
        <begin position="112"/>
        <end position="132"/>
    </location>
</feature>
<feature type="transmembrane region" description="Helical" evidence="2">
    <location>
        <begin position="177"/>
        <end position="197"/>
    </location>
</feature>
<feature type="transmembrane region" description="Helical" evidence="2">
    <location>
        <begin position="225"/>
        <end position="245"/>
    </location>
</feature>
<feature type="transmembrane region" description="Helical" evidence="2">
    <location>
        <begin position="287"/>
        <end position="307"/>
    </location>
</feature>
<feature type="transmembrane region" description="Helical" evidence="2">
    <location>
        <begin position="319"/>
        <end position="339"/>
    </location>
</feature>
<feature type="transmembrane region" description="Helical" evidence="2">
    <location>
        <begin position="346"/>
        <end position="366"/>
    </location>
</feature>
<feature type="binding site" description="axial binding residue" evidence="2">
    <location>
        <position position="82"/>
    </location>
    <ligand>
        <name>heme b</name>
        <dbReference type="ChEBI" id="CHEBI:60344"/>
        <label>b562</label>
    </ligand>
    <ligandPart>
        <name>Fe</name>
        <dbReference type="ChEBI" id="CHEBI:18248"/>
    </ligandPart>
</feature>
<feature type="binding site" description="axial binding residue" evidence="2">
    <location>
        <position position="96"/>
    </location>
    <ligand>
        <name>heme b</name>
        <dbReference type="ChEBI" id="CHEBI:60344"/>
        <label>b566</label>
    </ligand>
    <ligandPart>
        <name>Fe</name>
        <dbReference type="ChEBI" id="CHEBI:18248"/>
    </ligandPart>
</feature>
<feature type="binding site" description="axial binding residue" evidence="2">
    <location>
        <position position="181"/>
    </location>
    <ligand>
        <name>heme b</name>
        <dbReference type="ChEBI" id="CHEBI:60344"/>
        <label>b562</label>
    </ligand>
    <ligandPart>
        <name>Fe</name>
        <dbReference type="ChEBI" id="CHEBI:18248"/>
    </ligandPart>
</feature>
<feature type="binding site" description="axial binding residue" evidence="2">
    <location>
        <position position="195"/>
    </location>
    <ligand>
        <name>heme b</name>
        <dbReference type="ChEBI" id="CHEBI:60344"/>
        <label>b566</label>
    </ligand>
    <ligandPart>
        <name>Fe</name>
        <dbReference type="ChEBI" id="CHEBI:18248"/>
    </ligandPart>
</feature>
<feature type="binding site" evidence="2">
    <location>
        <position position="200"/>
    </location>
    <ligand>
        <name>a ubiquinone</name>
        <dbReference type="ChEBI" id="CHEBI:16389"/>
    </ligand>
</feature>
<name>CYB_CHLAG</name>
<accession>Q94TE4</accession>
<sequence length="379" mass="42304">MALRKTHPLLKIANDALVDLPAPSNISAWWNFGSLLGLCLATQILTGLFLAMHYTSDIATAFSSVTHICRDVNYGWLIRNMHANGASFFFICIYMHIARGLYYGSYLYKETWNVGVILLLLVMMTAFVGYVLPWGQMSFWGATVITNLLSAVPYVGNALVQWIWGGFSVDNATLTRFFAFHFLFPFVIAAVTVIHLLFLHETGSNNPAGINSDADKISFHPYFSYKDLLGFIIMMVALTSLALFSPNLLGDPDNFTPANPLVTPPHIKPEWYFLFAYAILRSIPNKLGGVLALLASILVLMLVPFLHTSKQRGLTFRPLTQILFWTFVANVIILTWIGGMPVEHPFIIIGQVASFLYFLLLLVLSPLAGWVENKALSWA</sequence>
<reference key="1">
    <citation type="journal article" date="2001" name="Mol. Biol. Evol.">
        <title>Mitogenomic exploration of higher teleostean phylogenies: a case study for moderate-scale evolutionary genomics with 38 newly determined complete mitochondrial DNA sequences.</title>
        <authorList>
            <person name="Miya M."/>
            <person name="Kawaguchi A."/>
            <person name="Nishida M."/>
        </authorList>
    </citation>
    <scope>NUCLEOTIDE SEQUENCE [GENOMIC DNA]</scope>
</reference>
<proteinExistence type="inferred from homology"/>
<gene>
    <name type="primary">mt-cyb</name>
    <name type="synonym">cob</name>
    <name type="synonym">cytb</name>
    <name type="synonym">mtcyb</name>
</gene>
<protein>
    <recommendedName>
        <fullName>Cytochrome b</fullName>
    </recommendedName>
    <alternativeName>
        <fullName>Complex III subunit 3</fullName>
    </alternativeName>
    <alternativeName>
        <fullName>Complex III subunit III</fullName>
    </alternativeName>
    <alternativeName>
        <fullName>Cytochrome b-c1 complex subunit 3</fullName>
    </alternativeName>
    <alternativeName>
        <fullName>Ubiquinol-cytochrome-c reductase complex cytochrome b subunit</fullName>
    </alternativeName>
</protein>
<dbReference type="EMBL" id="AP002918">
    <property type="protein sequence ID" value="BAB70026.1"/>
    <property type="molecule type" value="Genomic_DNA"/>
</dbReference>
<dbReference type="RefSeq" id="NP_443241.1">
    <property type="nucleotide sequence ID" value="NC_003160.1"/>
</dbReference>
<dbReference type="SMR" id="Q94TE4"/>
<dbReference type="GeneID" id="804137"/>
<dbReference type="CTD" id="4519"/>
<dbReference type="GO" id="GO:0005743">
    <property type="term" value="C:mitochondrial inner membrane"/>
    <property type="evidence" value="ECO:0007669"/>
    <property type="project" value="UniProtKB-SubCell"/>
</dbReference>
<dbReference type="GO" id="GO:0045275">
    <property type="term" value="C:respiratory chain complex III"/>
    <property type="evidence" value="ECO:0007669"/>
    <property type="project" value="InterPro"/>
</dbReference>
<dbReference type="GO" id="GO:0046872">
    <property type="term" value="F:metal ion binding"/>
    <property type="evidence" value="ECO:0007669"/>
    <property type="project" value="UniProtKB-KW"/>
</dbReference>
<dbReference type="GO" id="GO:0008121">
    <property type="term" value="F:ubiquinol-cytochrome-c reductase activity"/>
    <property type="evidence" value="ECO:0007669"/>
    <property type="project" value="InterPro"/>
</dbReference>
<dbReference type="GO" id="GO:0006122">
    <property type="term" value="P:mitochondrial electron transport, ubiquinol to cytochrome c"/>
    <property type="evidence" value="ECO:0007669"/>
    <property type="project" value="TreeGrafter"/>
</dbReference>
<dbReference type="CDD" id="cd00290">
    <property type="entry name" value="cytochrome_b_C"/>
    <property type="match status" value="1"/>
</dbReference>
<dbReference type="CDD" id="cd00284">
    <property type="entry name" value="Cytochrome_b_N"/>
    <property type="match status" value="1"/>
</dbReference>
<dbReference type="FunFam" id="1.20.810.10:FF:000002">
    <property type="entry name" value="Cytochrome b"/>
    <property type="match status" value="1"/>
</dbReference>
<dbReference type="Gene3D" id="1.20.810.10">
    <property type="entry name" value="Cytochrome Bc1 Complex, Chain C"/>
    <property type="match status" value="1"/>
</dbReference>
<dbReference type="InterPro" id="IPR005798">
    <property type="entry name" value="Cyt_b/b6_C"/>
</dbReference>
<dbReference type="InterPro" id="IPR036150">
    <property type="entry name" value="Cyt_b/b6_C_sf"/>
</dbReference>
<dbReference type="InterPro" id="IPR005797">
    <property type="entry name" value="Cyt_b/b6_N"/>
</dbReference>
<dbReference type="InterPro" id="IPR027387">
    <property type="entry name" value="Cytb/b6-like_sf"/>
</dbReference>
<dbReference type="InterPro" id="IPR030689">
    <property type="entry name" value="Cytochrome_b"/>
</dbReference>
<dbReference type="InterPro" id="IPR048260">
    <property type="entry name" value="Cytochrome_b_C_euk/bac"/>
</dbReference>
<dbReference type="InterPro" id="IPR048259">
    <property type="entry name" value="Cytochrome_b_N_euk/bac"/>
</dbReference>
<dbReference type="InterPro" id="IPR016174">
    <property type="entry name" value="Di-haem_cyt_TM"/>
</dbReference>
<dbReference type="PANTHER" id="PTHR19271">
    <property type="entry name" value="CYTOCHROME B"/>
    <property type="match status" value="1"/>
</dbReference>
<dbReference type="PANTHER" id="PTHR19271:SF16">
    <property type="entry name" value="CYTOCHROME B"/>
    <property type="match status" value="1"/>
</dbReference>
<dbReference type="Pfam" id="PF00032">
    <property type="entry name" value="Cytochrom_B_C"/>
    <property type="match status" value="1"/>
</dbReference>
<dbReference type="Pfam" id="PF00033">
    <property type="entry name" value="Cytochrome_B"/>
    <property type="match status" value="1"/>
</dbReference>
<dbReference type="PIRSF" id="PIRSF038885">
    <property type="entry name" value="COB"/>
    <property type="match status" value="1"/>
</dbReference>
<dbReference type="SUPFAM" id="SSF81648">
    <property type="entry name" value="a domain/subunit of cytochrome bc1 complex (Ubiquinol-cytochrome c reductase)"/>
    <property type="match status" value="1"/>
</dbReference>
<dbReference type="SUPFAM" id="SSF81342">
    <property type="entry name" value="Transmembrane di-heme cytochromes"/>
    <property type="match status" value="1"/>
</dbReference>
<dbReference type="PROSITE" id="PS51003">
    <property type="entry name" value="CYTB_CTER"/>
    <property type="match status" value="1"/>
</dbReference>
<dbReference type="PROSITE" id="PS51002">
    <property type="entry name" value="CYTB_NTER"/>
    <property type="match status" value="1"/>
</dbReference>
<comment type="function">
    <text evidence="2">Component of the ubiquinol-cytochrome c reductase complex (complex III or cytochrome b-c1 complex) that is part of the mitochondrial respiratory chain. The b-c1 complex mediates electron transfer from ubiquinol to cytochrome c. Contributes to the generation of a proton gradient across the mitochondrial membrane that is then used for ATP synthesis.</text>
</comment>
<comment type="cofactor">
    <cofactor evidence="2">
        <name>heme b</name>
        <dbReference type="ChEBI" id="CHEBI:60344"/>
    </cofactor>
    <text evidence="2">Binds 2 heme b groups non-covalently.</text>
</comment>
<comment type="subunit">
    <text evidence="2">The cytochrome bc1 complex contains 3 respiratory subunits (MT-CYB, CYC1 and UQCRFS1), 2 core proteins (UQCRC1 and UQCRC2) and probably 6 low-molecular weight proteins.</text>
</comment>
<comment type="subcellular location">
    <subcellularLocation>
        <location evidence="2">Mitochondrion inner membrane</location>
        <topology evidence="2">Multi-pass membrane protein</topology>
    </subcellularLocation>
</comment>
<comment type="miscellaneous">
    <text evidence="1">Heme 1 (or BL or b562) is low-potential and absorbs at about 562 nm, and heme 2 (or BH or b566) is high-potential and absorbs at about 566 nm.</text>
</comment>
<comment type="similarity">
    <text evidence="3 4">Belongs to the cytochrome b family.</text>
</comment>
<comment type="caution">
    <text evidence="2">The full-length protein contains only eight transmembrane helices, not nine as predicted by bioinformatics tools.</text>
</comment>
<geneLocation type="mitochondrion"/>
<keyword id="KW-0249">Electron transport</keyword>
<keyword id="KW-0349">Heme</keyword>
<keyword id="KW-0408">Iron</keyword>
<keyword id="KW-0472">Membrane</keyword>
<keyword id="KW-0479">Metal-binding</keyword>
<keyword id="KW-0496">Mitochondrion</keyword>
<keyword id="KW-0999">Mitochondrion inner membrane</keyword>
<keyword id="KW-0679">Respiratory chain</keyword>
<keyword id="KW-0812">Transmembrane</keyword>
<keyword id="KW-1133">Transmembrane helix</keyword>
<keyword id="KW-0813">Transport</keyword>
<keyword id="KW-0830">Ubiquinone</keyword>
<evidence type="ECO:0000250" key="1"/>
<evidence type="ECO:0000250" key="2">
    <source>
        <dbReference type="UniProtKB" id="P00157"/>
    </source>
</evidence>
<evidence type="ECO:0000255" key="3">
    <source>
        <dbReference type="PROSITE-ProRule" id="PRU00967"/>
    </source>
</evidence>
<evidence type="ECO:0000255" key="4">
    <source>
        <dbReference type="PROSITE-ProRule" id="PRU00968"/>
    </source>
</evidence>